<protein>
    <recommendedName>
        <fullName evidence="1">Polyamine aminopropyltransferase</fullName>
    </recommendedName>
    <alternativeName>
        <fullName evidence="1">Putrescine aminopropyltransferase</fullName>
        <shortName evidence="1">PAPT</shortName>
    </alternativeName>
    <alternativeName>
        <fullName evidence="1">Spermidine synthase</fullName>
        <shortName evidence="1">SPDS</shortName>
        <shortName evidence="1">SPDSY</shortName>
        <ecNumber evidence="1">2.5.1.16</ecNumber>
    </alternativeName>
</protein>
<proteinExistence type="inferred from homology"/>
<name>SPEE_ALKOO</name>
<accession>A8MLM9</accession>
<dbReference type="EC" id="2.5.1.16" evidence="1"/>
<dbReference type="EMBL" id="CP000853">
    <property type="protein sequence ID" value="ABW17946.1"/>
    <property type="molecule type" value="Genomic_DNA"/>
</dbReference>
<dbReference type="RefSeq" id="WP_012158261.1">
    <property type="nucleotide sequence ID" value="NC_009922.1"/>
</dbReference>
<dbReference type="SMR" id="A8MLM9"/>
<dbReference type="STRING" id="350688.Clos_0384"/>
<dbReference type="KEGG" id="aoe:Clos_0384"/>
<dbReference type="eggNOG" id="COG0421">
    <property type="taxonomic scope" value="Bacteria"/>
</dbReference>
<dbReference type="HOGENOM" id="CLU_048199_0_0_9"/>
<dbReference type="OrthoDB" id="9793120at2"/>
<dbReference type="UniPathway" id="UPA00248">
    <property type="reaction ID" value="UER00314"/>
</dbReference>
<dbReference type="Proteomes" id="UP000000269">
    <property type="component" value="Chromosome"/>
</dbReference>
<dbReference type="GO" id="GO:0005829">
    <property type="term" value="C:cytosol"/>
    <property type="evidence" value="ECO:0007669"/>
    <property type="project" value="TreeGrafter"/>
</dbReference>
<dbReference type="GO" id="GO:0004766">
    <property type="term" value="F:spermidine synthase activity"/>
    <property type="evidence" value="ECO:0007669"/>
    <property type="project" value="UniProtKB-UniRule"/>
</dbReference>
<dbReference type="GO" id="GO:0008295">
    <property type="term" value="P:spermidine biosynthetic process"/>
    <property type="evidence" value="ECO:0007669"/>
    <property type="project" value="UniProtKB-UniRule"/>
</dbReference>
<dbReference type="CDD" id="cd02440">
    <property type="entry name" value="AdoMet_MTases"/>
    <property type="match status" value="1"/>
</dbReference>
<dbReference type="Gene3D" id="2.30.140.10">
    <property type="entry name" value="Spermidine synthase, tetramerisation domain"/>
    <property type="match status" value="1"/>
</dbReference>
<dbReference type="Gene3D" id="3.40.50.150">
    <property type="entry name" value="Vaccinia Virus protein VP39"/>
    <property type="match status" value="1"/>
</dbReference>
<dbReference type="HAMAP" id="MF_00198">
    <property type="entry name" value="Spermidine_synth"/>
    <property type="match status" value="1"/>
</dbReference>
<dbReference type="InterPro" id="IPR030374">
    <property type="entry name" value="PABS"/>
</dbReference>
<dbReference type="InterPro" id="IPR029063">
    <property type="entry name" value="SAM-dependent_MTases_sf"/>
</dbReference>
<dbReference type="InterPro" id="IPR001045">
    <property type="entry name" value="Spermi_synthase"/>
</dbReference>
<dbReference type="InterPro" id="IPR035246">
    <property type="entry name" value="Spermidine_synt_N"/>
</dbReference>
<dbReference type="InterPro" id="IPR037163">
    <property type="entry name" value="Spermidine_synt_N_sf"/>
</dbReference>
<dbReference type="NCBIfam" id="NF002010">
    <property type="entry name" value="PRK00811.1"/>
    <property type="match status" value="1"/>
</dbReference>
<dbReference type="NCBIfam" id="TIGR00417">
    <property type="entry name" value="speE"/>
    <property type="match status" value="1"/>
</dbReference>
<dbReference type="PANTHER" id="PTHR11558:SF11">
    <property type="entry name" value="SPERMIDINE SYNTHASE"/>
    <property type="match status" value="1"/>
</dbReference>
<dbReference type="PANTHER" id="PTHR11558">
    <property type="entry name" value="SPERMIDINE/SPERMINE SYNTHASE"/>
    <property type="match status" value="1"/>
</dbReference>
<dbReference type="Pfam" id="PF17284">
    <property type="entry name" value="Spermine_synt_N"/>
    <property type="match status" value="1"/>
</dbReference>
<dbReference type="Pfam" id="PF01564">
    <property type="entry name" value="Spermine_synth"/>
    <property type="match status" value="1"/>
</dbReference>
<dbReference type="SUPFAM" id="SSF53335">
    <property type="entry name" value="S-adenosyl-L-methionine-dependent methyltransferases"/>
    <property type="match status" value="1"/>
</dbReference>
<dbReference type="PROSITE" id="PS51006">
    <property type="entry name" value="PABS_2"/>
    <property type="match status" value="1"/>
</dbReference>
<sequence>MELWYTEQHTEDVRFSIKVDNQLYSGQSEFQRIDVFESKEFGKFFTLDGLMMVTEKDEFIYHDMITHIPMATNPKIKNVLVIGAGDGGTVRELTRYETIENIDMVEIDKLVVDICKEYLPQTASKLEDPRVHIYYEDGLKFVRTKENEYDLIIVDSTDPFGPGEGLFTKEFYGNCFKALKEDGILVNQHESPYYASYAKSMKRAHKRIKEFFPICKVYQAHIPTYPSGHWLFGFASKKYDPIEDLNSEAWNALGLQTKYYNTDLHMGCFALPNYVKELLEKEEE</sequence>
<feature type="chain" id="PRO_1000058549" description="Polyamine aminopropyltransferase">
    <location>
        <begin position="1"/>
        <end position="284"/>
    </location>
</feature>
<feature type="domain" description="PABS" evidence="1">
    <location>
        <begin position="2"/>
        <end position="237"/>
    </location>
</feature>
<feature type="active site" description="Proton acceptor" evidence="1">
    <location>
        <position position="155"/>
    </location>
</feature>
<feature type="binding site" evidence="1">
    <location>
        <position position="31"/>
    </location>
    <ligand>
        <name>S-methyl-5'-thioadenosine</name>
        <dbReference type="ChEBI" id="CHEBI:17509"/>
    </ligand>
</feature>
<feature type="binding site" evidence="1">
    <location>
        <position position="62"/>
    </location>
    <ligand>
        <name>spermidine</name>
        <dbReference type="ChEBI" id="CHEBI:57834"/>
    </ligand>
</feature>
<feature type="binding site" evidence="1">
    <location>
        <position position="86"/>
    </location>
    <ligand>
        <name>spermidine</name>
        <dbReference type="ChEBI" id="CHEBI:57834"/>
    </ligand>
</feature>
<feature type="binding site" evidence="1">
    <location>
        <position position="106"/>
    </location>
    <ligand>
        <name>S-methyl-5'-thioadenosine</name>
        <dbReference type="ChEBI" id="CHEBI:17509"/>
    </ligand>
</feature>
<feature type="binding site" evidence="1">
    <location>
        <begin position="137"/>
        <end position="138"/>
    </location>
    <ligand>
        <name>S-methyl-5'-thioadenosine</name>
        <dbReference type="ChEBI" id="CHEBI:17509"/>
    </ligand>
</feature>
<feature type="binding site" evidence="1">
    <location>
        <begin position="155"/>
        <end position="158"/>
    </location>
    <ligand>
        <name>spermidine</name>
        <dbReference type="ChEBI" id="CHEBI:57834"/>
    </ligand>
</feature>
<feature type="binding site" evidence="1">
    <location>
        <position position="162"/>
    </location>
    <ligand>
        <name>S-methyl-5'-thioadenosine</name>
        <dbReference type="ChEBI" id="CHEBI:17509"/>
    </ligand>
</feature>
<comment type="function">
    <text evidence="1">Catalyzes the irreversible transfer of a propylamine group from the amino donor S-adenosylmethioninamine (decarboxy-AdoMet) to putrescine (1,4-diaminobutane) to yield spermidine.</text>
</comment>
<comment type="catalytic activity">
    <reaction evidence="1">
        <text>S-adenosyl 3-(methylsulfanyl)propylamine + putrescine = S-methyl-5'-thioadenosine + spermidine + H(+)</text>
        <dbReference type="Rhea" id="RHEA:12721"/>
        <dbReference type="ChEBI" id="CHEBI:15378"/>
        <dbReference type="ChEBI" id="CHEBI:17509"/>
        <dbReference type="ChEBI" id="CHEBI:57443"/>
        <dbReference type="ChEBI" id="CHEBI:57834"/>
        <dbReference type="ChEBI" id="CHEBI:326268"/>
        <dbReference type="EC" id="2.5.1.16"/>
    </reaction>
</comment>
<comment type="pathway">
    <text evidence="1">Amine and polyamine biosynthesis; spermidine biosynthesis; spermidine from putrescine: step 1/1.</text>
</comment>
<comment type="subunit">
    <text evidence="1">Homodimer or homotetramer.</text>
</comment>
<comment type="subcellular location">
    <subcellularLocation>
        <location evidence="1">Cytoplasm</location>
    </subcellularLocation>
</comment>
<comment type="similarity">
    <text evidence="1">Belongs to the spermidine/spermine synthase family.</text>
</comment>
<reference key="1">
    <citation type="submission" date="2007-10" db="EMBL/GenBank/DDBJ databases">
        <title>Complete genome of Alkaliphilus oremlandii OhILAs.</title>
        <authorList>
            <person name="Copeland A."/>
            <person name="Lucas S."/>
            <person name="Lapidus A."/>
            <person name="Barry K."/>
            <person name="Detter J.C."/>
            <person name="Glavina del Rio T."/>
            <person name="Hammon N."/>
            <person name="Israni S."/>
            <person name="Dalin E."/>
            <person name="Tice H."/>
            <person name="Pitluck S."/>
            <person name="Chain P."/>
            <person name="Malfatti S."/>
            <person name="Shin M."/>
            <person name="Vergez L."/>
            <person name="Schmutz J."/>
            <person name="Larimer F."/>
            <person name="Land M."/>
            <person name="Hauser L."/>
            <person name="Kyrpides N."/>
            <person name="Mikhailova N."/>
            <person name="Stolz J.F."/>
            <person name="Dawson A."/>
            <person name="Fisher E."/>
            <person name="Crable B."/>
            <person name="Perera E."/>
            <person name="Lisak J."/>
            <person name="Ranganathan M."/>
            <person name="Basu P."/>
            <person name="Richardson P."/>
        </authorList>
    </citation>
    <scope>NUCLEOTIDE SEQUENCE [LARGE SCALE GENOMIC DNA]</scope>
    <source>
        <strain>OhILAs</strain>
    </source>
</reference>
<keyword id="KW-0963">Cytoplasm</keyword>
<keyword id="KW-0620">Polyamine biosynthesis</keyword>
<keyword id="KW-1185">Reference proteome</keyword>
<keyword id="KW-0745">Spermidine biosynthesis</keyword>
<keyword id="KW-0808">Transferase</keyword>
<evidence type="ECO:0000255" key="1">
    <source>
        <dbReference type="HAMAP-Rule" id="MF_00198"/>
    </source>
</evidence>
<organism>
    <name type="scientific">Alkaliphilus oremlandii (strain OhILAs)</name>
    <name type="common">Clostridium oremlandii (strain OhILAs)</name>
    <dbReference type="NCBI Taxonomy" id="350688"/>
    <lineage>
        <taxon>Bacteria</taxon>
        <taxon>Bacillati</taxon>
        <taxon>Bacillota</taxon>
        <taxon>Clostridia</taxon>
        <taxon>Peptostreptococcales</taxon>
        <taxon>Natronincolaceae</taxon>
        <taxon>Alkaliphilus</taxon>
    </lineage>
</organism>
<gene>
    <name evidence="1" type="primary">speE</name>
    <name type="ordered locus">Clos_0384</name>
</gene>